<accession>C4ZBS5</accession>
<comment type="function">
    <text evidence="1">Binds the lower part of the 30S subunit head. Binds mRNA in the 70S ribosome, positioning it for translation.</text>
</comment>
<comment type="subunit">
    <text evidence="1">Part of the 30S ribosomal subunit. Forms a tight complex with proteins S10 and S14.</text>
</comment>
<comment type="similarity">
    <text evidence="1">Belongs to the universal ribosomal protein uS3 family.</text>
</comment>
<feature type="chain" id="PRO_1000214338" description="Small ribosomal subunit protein uS3">
    <location>
        <begin position="1"/>
        <end position="218"/>
    </location>
</feature>
<feature type="domain" description="KH type-2" evidence="1">
    <location>
        <begin position="38"/>
        <end position="106"/>
    </location>
</feature>
<organism>
    <name type="scientific">Agathobacter rectalis (strain ATCC 33656 / DSM 3377 / JCM 17463 / KCTC 5835 / VPI 0990)</name>
    <name type="common">Eubacterium rectale</name>
    <dbReference type="NCBI Taxonomy" id="515619"/>
    <lineage>
        <taxon>Bacteria</taxon>
        <taxon>Bacillati</taxon>
        <taxon>Bacillota</taxon>
        <taxon>Clostridia</taxon>
        <taxon>Lachnospirales</taxon>
        <taxon>Lachnospiraceae</taxon>
        <taxon>Agathobacter</taxon>
    </lineage>
</organism>
<keyword id="KW-0687">Ribonucleoprotein</keyword>
<keyword id="KW-0689">Ribosomal protein</keyword>
<keyword id="KW-0694">RNA-binding</keyword>
<keyword id="KW-0699">rRNA-binding</keyword>
<proteinExistence type="inferred from homology"/>
<reference key="1">
    <citation type="journal article" date="2009" name="Proc. Natl. Acad. Sci. U.S.A.">
        <title>Characterizing a model human gut microbiota composed of members of its two dominant bacterial phyla.</title>
        <authorList>
            <person name="Mahowald M.A."/>
            <person name="Rey F.E."/>
            <person name="Seedorf H."/>
            <person name="Turnbaugh P.J."/>
            <person name="Fulton R.S."/>
            <person name="Wollam A."/>
            <person name="Shah N."/>
            <person name="Wang C."/>
            <person name="Magrini V."/>
            <person name="Wilson R.K."/>
            <person name="Cantarel B.L."/>
            <person name="Coutinho P.M."/>
            <person name="Henrissat B."/>
            <person name="Crock L.W."/>
            <person name="Russell A."/>
            <person name="Verberkmoes N.C."/>
            <person name="Hettich R.L."/>
            <person name="Gordon J.I."/>
        </authorList>
    </citation>
    <scope>NUCLEOTIDE SEQUENCE [LARGE SCALE GENOMIC DNA]</scope>
    <source>
        <strain>ATCC 33656 / DSM 3377 / JCM 17463 / KCTC 5835 / LMG 30912 / VPI 0990</strain>
    </source>
</reference>
<protein>
    <recommendedName>
        <fullName evidence="1">Small ribosomal subunit protein uS3</fullName>
    </recommendedName>
    <alternativeName>
        <fullName evidence="2">30S ribosomal protein S3</fullName>
    </alternativeName>
</protein>
<evidence type="ECO:0000255" key="1">
    <source>
        <dbReference type="HAMAP-Rule" id="MF_01309"/>
    </source>
</evidence>
<evidence type="ECO:0000305" key="2"/>
<gene>
    <name evidence="1" type="primary">rpsC</name>
    <name type="ordered locus">EUBREC_0424</name>
</gene>
<dbReference type="EMBL" id="CP001107">
    <property type="protein sequence ID" value="ACR74215.1"/>
    <property type="molecule type" value="Genomic_DNA"/>
</dbReference>
<dbReference type="RefSeq" id="WP_012741333.1">
    <property type="nucleotide sequence ID" value="NZ_CAXSYD010000003.1"/>
</dbReference>
<dbReference type="SMR" id="C4ZBS5"/>
<dbReference type="STRING" id="515619.EUBREC_0424"/>
<dbReference type="PaxDb" id="515619-EUBREC_0424"/>
<dbReference type="GeneID" id="86987334"/>
<dbReference type="KEGG" id="ere:EUBREC_0424"/>
<dbReference type="HOGENOM" id="CLU_058591_0_2_9"/>
<dbReference type="Proteomes" id="UP000001477">
    <property type="component" value="Chromosome"/>
</dbReference>
<dbReference type="GO" id="GO:0022627">
    <property type="term" value="C:cytosolic small ribosomal subunit"/>
    <property type="evidence" value="ECO:0007669"/>
    <property type="project" value="TreeGrafter"/>
</dbReference>
<dbReference type="GO" id="GO:0003729">
    <property type="term" value="F:mRNA binding"/>
    <property type="evidence" value="ECO:0007669"/>
    <property type="project" value="UniProtKB-UniRule"/>
</dbReference>
<dbReference type="GO" id="GO:0019843">
    <property type="term" value="F:rRNA binding"/>
    <property type="evidence" value="ECO:0007669"/>
    <property type="project" value="UniProtKB-UniRule"/>
</dbReference>
<dbReference type="GO" id="GO:0003735">
    <property type="term" value="F:structural constituent of ribosome"/>
    <property type="evidence" value="ECO:0007669"/>
    <property type="project" value="InterPro"/>
</dbReference>
<dbReference type="GO" id="GO:0006412">
    <property type="term" value="P:translation"/>
    <property type="evidence" value="ECO:0007669"/>
    <property type="project" value="UniProtKB-UniRule"/>
</dbReference>
<dbReference type="CDD" id="cd02412">
    <property type="entry name" value="KH-II_30S_S3"/>
    <property type="match status" value="1"/>
</dbReference>
<dbReference type="FunFam" id="3.30.1140.32:FF:000002">
    <property type="entry name" value="30S ribosomal protein S3"/>
    <property type="match status" value="1"/>
</dbReference>
<dbReference type="FunFam" id="3.30.300.20:FF:000001">
    <property type="entry name" value="30S ribosomal protein S3"/>
    <property type="match status" value="1"/>
</dbReference>
<dbReference type="Gene3D" id="3.30.300.20">
    <property type="match status" value="1"/>
</dbReference>
<dbReference type="Gene3D" id="3.30.1140.32">
    <property type="entry name" value="Ribosomal protein S3, C-terminal domain"/>
    <property type="match status" value="1"/>
</dbReference>
<dbReference type="HAMAP" id="MF_01309_B">
    <property type="entry name" value="Ribosomal_uS3_B"/>
    <property type="match status" value="1"/>
</dbReference>
<dbReference type="InterPro" id="IPR004087">
    <property type="entry name" value="KH_dom"/>
</dbReference>
<dbReference type="InterPro" id="IPR015946">
    <property type="entry name" value="KH_dom-like_a/b"/>
</dbReference>
<dbReference type="InterPro" id="IPR004044">
    <property type="entry name" value="KH_dom_type_2"/>
</dbReference>
<dbReference type="InterPro" id="IPR009019">
    <property type="entry name" value="KH_sf_prok-type"/>
</dbReference>
<dbReference type="InterPro" id="IPR036419">
    <property type="entry name" value="Ribosomal_S3_C_sf"/>
</dbReference>
<dbReference type="InterPro" id="IPR005704">
    <property type="entry name" value="Ribosomal_uS3_bac-typ"/>
</dbReference>
<dbReference type="InterPro" id="IPR001351">
    <property type="entry name" value="Ribosomal_uS3_C"/>
</dbReference>
<dbReference type="InterPro" id="IPR018280">
    <property type="entry name" value="Ribosomal_uS3_CS"/>
</dbReference>
<dbReference type="NCBIfam" id="TIGR01009">
    <property type="entry name" value="rpsC_bact"/>
    <property type="match status" value="1"/>
</dbReference>
<dbReference type="PANTHER" id="PTHR11760">
    <property type="entry name" value="30S/40S RIBOSOMAL PROTEIN S3"/>
    <property type="match status" value="1"/>
</dbReference>
<dbReference type="PANTHER" id="PTHR11760:SF19">
    <property type="entry name" value="SMALL RIBOSOMAL SUBUNIT PROTEIN US3C"/>
    <property type="match status" value="1"/>
</dbReference>
<dbReference type="Pfam" id="PF07650">
    <property type="entry name" value="KH_2"/>
    <property type="match status" value="1"/>
</dbReference>
<dbReference type="Pfam" id="PF00189">
    <property type="entry name" value="Ribosomal_S3_C"/>
    <property type="match status" value="1"/>
</dbReference>
<dbReference type="SMART" id="SM00322">
    <property type="entry name" value="KH"/>
    <property type="match status" value="1"/>
</dbReference>
<dbReference type="SUPFAM" id="SSF54814">
    <property type="entry name" value="Prokaryotic type KH domain (KH-domain type II)"/>
    <property type="match status" value="1"/>
</dbReference>
<dbReference type="SUPFAM" id="SSF54821">
    <property type="entry name" value="Ribosomal protein S3 C-terminal domain"/>
    <property type="match status" value="1"/>
</dbReference>
<dbReference type="PROSITE" id="PS50823">
    <property type="entry name" value="KH_TYPE_2"/>
    <property type="match status" value="1"/>
</dbReference>
<dbReference type="PROSITE" id="PS00548">
    <property type="entry name" value="RIBOSOMAL_S3"/>
    <property type="match status" value="1"/>
</dbReference>
<name>RS3_AGARV</name>
<sequence length="218" mass="24064">MGQKVNPHGLRVGVIKDWDSKWYAEGDFADYLVEDYNIRTFLKKKLYAAGVSKIEIERASDRVKVIIYTAKPGVVIGKGGAEIEKIKAEVQKLTDKKLVVDIKEVKRPDKDAQLVAENIALQLENRVSFRRAMKSCMGRAMKAGVKGIKTTCSGRLGGADMARTETYNDGTTPLQTIRADIDYGFAEADTTYGKVGVKVWIYKGEVLPTKANKEGGAK</sequence>